<keyword id="KW-0202">Cytokine</keyword>
<keyword id="KW-0963">Cytoplasm</keyword>
<keyword id="KW-0395">Inflammatory response</keyword>
<keyword id="KW-0458">Lysosome</keyword>
<keyword id="KW-0497">Mitogen</keyword>
<keyword id="KW-0666">Pyrogen</keyword>
<keyword id="KW-1185">Reference proteome</keyword>
<keyword id="KW-0964">Secreted</keyword>
<gene>
    <name type="primary">IL1B</name>
</gene>
<sequence>MATVPELTSEMMAYHSGNENDLFFEADGPNYMKSCFQDLDLCCPDEGIQLRISCQPYNKSFRQVLSVVVALEKLRQKAVPCPQAFQDDGLRTFFSLIFEEEPVLCNTWDDYSLECDAVRSLHCRLQDAQQKSLVLSGTYELKALHLNAENLNQQVVFSMSFVQGEESNDKIPVALGLRGKNLYLSCVMKDDKPTLQLESVDPNRYPKKKMEKRFVFNKIEIKDKLEFESAQFPNWYISTSQTEYMPVFLGNNSGGQDLIDFSMEFVSS</sequence>
<organism>
    <name type="scientific">Oryctolagus cuniculus</name>
    <name type="common">Rabbit</name>
    <dbReference type="NCBI Taxonomy" id="9986"/>
    <lineage>
        <taxon>Eukaryota</taxon>
        <taxon>Metazoa</taxon>
        <taxon>Chordata</taxon>
        <taxon>Craniata</taxon>
        <taxon>Vertebrata</taxon>
        <taxon>Euteleostomi</taxon>
        <taxon>Mammalia</taxon>
        <taxon>Eutheria</taxon>
        <taxon>Euarchontoglires</taxon>
        <taxon>Glires</taxon>
        <taxon>Lagomorpha</taxon>
        <taxon>Leporidae</taxon>
        <taxon>Oryctolagus</taxon>
    </lineage>
</organism>
<feature type="propeptide" id="PRO_0000015315">
    <location>
        <begin position="1"/>
        <end position="116"/>
    </location>
</feature>
<feature type="chain" id="PRO_0000015316" description="Interleukin-1 beta">
    <location>
        <begin position="117"/>
        <end position="268"/>
    </location>
</feature>
<feature type="site" description="Important for interaction with integrin" evidence="2">
    <location>
        <position position="170"/>
    </location>
</feature>
<feature type="site" description="Important for interaction with integrin" evidence="2">
    <location>
        <position position="180"/>
    </location>
</feature>
<feature type="site" description="Important for interaction with integrin" evidence="2">
    <location>
        <position position="189"/>
    </location>
</feature>
<evidence type="ECO:0000250" key="1"/>
<evidence type="ECO:0000250" key="2">
    <source>
        <dbReference type="UniProtKB" id="P01584"/>
    </source>
</evidence>
<evidence type="ECO:0000250" key="3">
    <source>
        <dbReference type="UniProtKB" id="P10749"/>
    </source>
</evidence>
<evidence type="ECO:0000305" key="4"/>
<dbReference type="EMBL" id="D21835">
    <property type="protein sequence ID" value="BAA04863.1"/>
    <property type="molecule type" value="mRNA"/>
</dbReference>
<dbReference type="EMBL" id="M26295">
    <property type="protein sequence ID" value="AAA31373.1"/>
    <property type="molecule type" value="mRNA"/>
</dbReference>
<dbReference type="PIR" id="A27714">
    <property type="entry name" value="A30584"/>
</dbReference>
<dbReference type="RefSeq" id="NP_001075670.1">
    <property type="nucleotide sequence ID" value="NM_001082201.1"/>
</dbReference>
<dbReference type="SMR" id="P14628"/>
<dbReference type="FunCoup" id="P14628">
    <property type="interactions" value="80"/>
</dbReference>
<dbReference type="STRING" id="9986.ENSOCUP00000021869"/>
<dbReference type="PaxDb" id="9986-ENSOCUP00000021869"/>
<dbReference type="GeneID" id="100008990"/>
<dbReference type="KEGG" id="ocu:100008990"/>
<dbReference type="CTD" id="3553"/>
<dbReference type="eggNOG" id="ENOG502S3E9">
    <property type="taxonomic scope" value="Eukaryota"/>
</dbReference>
<dbReference type="InParanoid" id="P14628"/>
<dbReference type="OrthoDB" id="9449069at2759"/>
<dbReference type="Proteomes" id="UP000001811">
    <property type="component" value="Unplaced"/>
</dbReference>
<dbReference type="GO" id="GO:0005829">
    <property type="term" value="C:cytosol"/>
    <property type="evidence" value="ECO:0007669"/>
    <property type="project" value="UniProtKB-SubCell"/>
</dbReference>
<dbReference type="GO" id="GO:0005615">
    <property type="term" value="C:extracellular space"/>
    <property type="evidence" value="ECO:0007669"/>
    <property type="project" value="UniProtKB-KW"/>
</dbReference>
<dbReference type="GO" id="GO:0005764">
    <property type="term" value="C:lysosome"/>
    <property type="evidence" value="ECO:0007669"/>
    <property type="project" value="UniProtKB-SubCell"/>
</dbReference>
<dbReference type="GO" id="GO:0005125">
    <property type="term" value="F:cytokine activity"/>
    <property type="evidence" value="ECO:0007669"/>
    <property type="project" value="UniProtKB-KW"/>
</dbReference>
<dbReference type="GO" id="GO:0005178">
    <property type="term" value="F:integrin binding"/>
    <property type="evidence" value="ECO:0000250"/>
    <property type="project" value="UniProtKB"/>
</dbReference>
<dbReference type="GO" id="GO:0005149">
    <property type="term" value="F:interleukin-1 receptor binding"/>
    <property type="evidence" value="ECO:0007669"/>
    <property type="project" value="InterPro"/>
</dbReference>
<dbReference type="GO" id="GO:0071222">
    <property type="term" value="P:cellular response to lipopolysaccharide"/>
    <property type="evidence" value="ECO:0007669"/>
    <property type="project" value="TreeGrafter"/>
</dbReference>
<dbReference type="GO" id="GO:0019221">
    <property type="term" value="P:cytokine-mediated signaling pathway"/>
    <property type="evidence" value="ECO:0007669"/>
    <property type="project" value="TreeGrafter"/>
</dbReference>
<dbReference type="GO" id="GO:0001660">
    <property type="term" value="P:fever generation"/>
    <property type="evidence" value="ECO:0007669"/>
    <property type="project" value="UniProtKB-KW"/>
</dbReference>
<dbReference type="GO" id="GO:0006955">
    <property type="term" value="P:immune response"/>
    <property type="evidence" value="ECO:0007669"/>
    <property type="project" value="InterPro"/>
</dbReference>
<dbReference type="GO" id="GO:0051781">
    <property type="term" value="P:positive regulation of cell division"/>
    <property type="evidence" value="ECO:0007669"/>
    <property type="project" value="UniProtKB-KW"/>
</dbReference>
<dbReference type="GO" id="GO:0033092">
    <property type="term" value="P:positive regulation of immature T cell proliferation in thymus"/>
    <property type="evidence" value="ECO:0007669"/>
    <property type="project" value="TreeGrafter"/>
</dbReference>
<dbReference type="GO" id="GO:2000556">
    <property type="term" value="P:positive regulation of T-helper 1 cell cytokine production"/>
    <property type="evidence" value="ECO:0000250"/>
    <property type="project" value="UniProtKB"/>
</dbReference>
<dbReference type="GO" id="GO:0032729">
    <property type="term" value="P:positive regulation of type II interferon production"/>
    <property type="evidence" value="ECO:0000250"/>
    <property type="project" value="UniProtKB"/>
</dbReference>
<dbReference type="GO" id="GO:0010573">
    <property type="term" value="P:vascular endothelial growth factor production"/>
    <property type="evidence" value="ECO:0000250"/>
    <property type="project" value="UniProtKB"/>
</dbReference>
<dbReference type="CDD" id="cd23296">
    <property type="entry name" value="beta-trefoil_IL1B"/>
    <property type="match status" value="1"/>
</dbReference>
<dbReference type="FunFam" id="2.80.10.50:FF:000027">
    <property type="entry name" value="Interleukin-1 beta"/>
    <property type="match status" value="1"/>
</dbReference>
<dbReference type="Gene3D" id="2.80.10.50">
    <property type="match status" value="1"/>
</dbReference>
<dbReference type="InterPro" id="IPR020877">
    <property type="entry name" value="IL-1_CS"/>
</dbReference>
<dbReference type="InterPro" id="IPR000975">
    <property type="entry name" value="IL-1_fam"/>
</dbReference>
<dbReference type="InterPro" id="IPR003502">
    <property type="entry name" value="IL-1_propep"/>
</dbReference>
<dbReference type="InterPro" id="IPR008996">
    <property type="entry name" value="IL1/FGF"/>
</dbReference>
<dbReference type="PANTHER" id="PTHR10078:SF30">
    <property type="entry name" value="INTERLEUKIN-1 BETA"/>
    <property type="match status" value="1"/>
</dbReference>
<dbReference type="PANTHER" id="PTHR10078">
    <property type="entry name" value="INTERLEUKIN-1 FAMILY MEMBER"/>
    <property type="match status" value="1"/>
</dbReference>
<dbReference type="Pfam" id="PF00340">
    <property type="entry name" value="IL1"/>
    <property type="match status" value="1"/>
</dbReference>
<dbReference type="Pfam" id="PF02394">
    <property type="entry name" value="IL1_propep"/>
    <property type="match status" value="1"/>
</dbReference>
<dbReference type="PRINTS" id="PR00262">
    <property type="entry name" value="IL1HBGF"/>
</dbReference>
<dbReference type="PRINTS" id="PR00264">
    <property type="entry name" value="INTERLEUKIN1"/>
</dbReference>
<dbReference type="PRINTS" id="PR01359">
    <property type="entry name" value="INTRLEUKIN1B"/>
</dbReference>
<dbReference type="PRINTS" id="PR01357">
    <property type="entry name" value="INTRLEUKN1AB"/>
</dbReference>
<dbReference type="SMART" id="SM00125">
    <property type="entry name" value="IL1"/>
    <property type="match status" value="1"/>
</dbReference>
<dbReference type="SUPFAM" id="SSF50353">
    <property type="entry name" value="Cytokine"/>
    <property type="match status" value="1"/>
</dbReference>
<dbReference type="PROSITE" id="PS00253">
    <property type="entry name" value="INTERLEUKIN_1"/>
    <property type="match status" value="1"/>
</dbReference>
<comment type="function">
    <text evidence="2">Potent pro-inflammatory cytokine. Initially discovered as the major endogenous pyrogen, induces prostaglandin synthesis, neutrophil influx and activation, T-cell activation and cytokine production, B-cell activation and antibody production, and fibroblast proliferation and collagen production. Promotes Th17 differentiation of T-cells. Synergizes with IL12/interleukin-12 to induce IFNG synthesis from T-helper 1 (Th1) cells. Plays a role in angiogenesis by inducing VEGF production synergistically with TNF and IL6. Involved in transduction of inflammation downstream of pyroptosis: its mature form is specifically released in the extracellular milieu by passing through the gasdermin-D (GSDMD) pore.</text>
</comment>
<comment type="subunit">
    <text evidence="2">Monomer. In its precursor form, weakly interacts with full-length MEFV; the mature cytokine does not interact at all. Interacts with integrins ITGAV:ITGBV and ITGA5:ITGB1; integrin-binding is required for IL1B signaling. Interacts with cargo receptor TMED10; the interaction is direct and is required for the secretion of IL1B mature form. Interacts with HSP90AB1; the interaction facilitates cargo translocation into the ERGIC. Interacts with HSP90B1; the interaction facilitates cargo translocation into the ERGIC.</text>
</comment>
<comment type="subcellular location">
    <subcellularLocation>
        <location evidence="2">Cytoplasm</location>
        <location evidence="2">Cytosol</location>
    </subcellularLocation>
    <subcellularLocation>
        <location evidence="2">Secreted</location>
    </subcellularLocation>
    <subcellularLocation>
        <location evidence="2">Lysosome</location>
    </subcellularLocation>
    <subcellularLocation>
        <location evidence="3">Secreted</location>
        <location evidence="3">Extracellular exosome</location>
    </subcellularLocation>
    <text evidence="2">The precursor is cytosolic. In response to inflammasome-activating signals, such as ATP for NLRP3 inflammasome or bacterial flagellin for NLRC4 inflammasome, cleaved and secreted. Mature form is secreted and released in the extracellular milieu by passing through the gasdermin-D (GSDMD) pore. In contrast, the precursor form is not released, due to the presence of an acidic region that is proteolytically removed by CASP1 during maturation. The secretion is dependent on protein unfolding and facilitated by the cargo receptor TMED10.</text>
</comment>
<comment type="miscellaneous">
    <text evidence="1">IL1B production occurs in 2 steps, each being controlled by different stimuli. First, inflammatory signals, such as LPS, stimulate the synthesis and promote the accumulation of cytosolic stores of pro-IL1B (priming). Then additional signals are required for inflammasome assembly, leading to CASP1 activation, pro-IL1B processing and eventually secretion of the active cytokine. IL1B processing and secretion are temporarily associated.</text>
</comment>
<comment type="similarity">
    <text evidence="4">Belongs to the IL-1 family.</text>
</comment>
<reference key="1">
    <citation type="journal article" date="1989" name="J. Immunol.">
        <title>Rabbit IL-1. Cloning, expression, biologic properties, and transcription during endotoxemia.</title>
        <authorList>
            <person name="Cannon J.G."/>
            <person name="Clark B.D."/>
            <person name="Wingfield P."/>
            <person name="Schmeissner U."/>
            <person name="Losberger C."/>
            <person name="Dinarello C.A."/>
            <person name="Shaw A.R."/>
        </authorList>
    </citation>
    <scope>NUCLEOTIDE SEQUENCE [MRNA]</scope>
</reference>
<reference key="2">
    <citation type="journal article" date="1988" name="Biochem. Biophys. Res. Commun.">
        <title>Cloning and sequence analysis of a cDNA for lymphocyte proliferation potentiating factor of rabbit polymorphonuclear leukocytes: identification rabbit interleukin 1 beta.</title>
        <authorList>
            <person name="Mori S."/>
            <person name="Goto F."/>
            <person name="Goto K."/>
            <person name="Ohkawara S."/>
            <person name="Maeda S."/>
            <person name="Shimada K."/>
            <person name="Yoshinaga M."/>
        </authorList>
    </citation>
    <scope>NUCLEOTIDE SEQUENCE [MRNA]</scope>
</reference>
<reference key="3">
    <citation type="journal article" date="1989" name="Protein Eng.">
        <title>Cloning of rabbit interleukin-1 beta: differential evolution of IL-1 alpha and IL-1 beta proteins.</title>
        <authorList>
            <person name="Young P.R."/>
            <person name="Sylvester D."/>
        </authorList>
    </citation>
    <scope>NUCLEOTIDE SEQUENCE [MRNA]</scope>
</reference>
<name>IL1B_RABIT</name>
<proteinExistence type="evidence at transcript level"/>
<protein>
    <recommendedName>
        <fullName>Interleukin-1 beta</fullName>
        <shortName>IL-1 beta</shortName>
    </recommendedName>
    <alternativeName>
        <fullName>Lymphocyte proliferation-potentiating factor</fullName>
    </alternativeName>
</protein>
<accession>P14628</accession>